<feature type="chain" id="PRO_1000141667" description="DNA-directed RNA polymerase subunit beta">
    <location>
        <begin position="1"/>
        <end position="1377"/>
    </location>
</feature>
<reference key="1">
    <citation type="journal article" date="2008" name="PLoS ONE">
        <title>Genome sequence of Brucella abortus vaccine strain S19 compared to virulent strains yields candidate virulence genes.</title>
        <authorList>
            <person name="Crasta O.R."/>
            <person name="Folkerts O."/>
            <person name="Fei Z."/>
            <person name="Mane S.P."/>
            <person name="Evans C."/>
            <person name="Martino-Catt S."/>
            <person name="Bricker B."/>
            <person name="Yu G."/>
            <person name="Du L."/>
            <person name="Sobral B.W."/>
        </authorList>
    </citation>
    <scope>NUCLEOTIDE SEQUENCE [LARGE SCALE GENOMIC DNA]</scope>
    <source>
        <strain>S19</strain>
    </source>
</reference>
<protein>
    <recommendedName>
        <fullName evidence="1">DNA-directed RNA polymerase subunit beta</fullName>
        <shortName evidence="1">RNAP subunit beta</shortName>
        <ecNumber evidence="1">2.7.7.6</ecNumber>
    </recommendedName>
    <alternativeName>
        <fullName evidence="1">RNA polymerase subunit beta</fullName>
    </alternativeName>
    <alternativeName>
        <fullName evidence="1">Transcriptase subunit beta</fullName>
    </alternativeName>
</protein>
<accession>B2S687</accession>
<proteinExistence type="inferred from homology"/>
<gene>
    <name evidence="1" type="primary">rpoB</name>
    <name type="ordered locus">BAbS19_I11790</name>
</gene>
<dbReference type="EC" id="2.7.7.6" evidence="1"/>
<dbReference type="EMBL" id="CP000887">
    <property type="protein sequence ID" value="ACD72684.1"/>
    <property type="molecule type" value="Genomic_DNA"/>
</dbReference>
<dbReference type="RefSeq" id="WP_002966855.1">
    <property type="nucleotide sequence ID" value="NC_010742.1"/>
</dbReference>
<dbReference type="SMR" id="B2S687"/>
<dbReference type="GeneID" id="97533517"/>
<dbReference type="KEGG" id="bmc:BAbS19_I11790"/>
<dbReference type="HOGENOM" id="CLU_000524_4_0_5"/>
<dbReference type="Proteomes" id="UP000002565">
    <property type="component" value="Chromosome 1"/>
</dbReference>
<dbReference type="GO" id="GO:0000428">
    <property type="term" value="C:DNA-directed RNA polymerase complex"/>
    <property type="evidence" value="ECO:0007669"/>
    <property type="project" value="UniProtKB-KW"/>
</dbReference>
<dbReference type="GO" id="GO:0003677">
    <property type="term" value="F:DNA binding"/>
    <property type="evidence" value="ECO:0007669"/>
    <property type="project" value="UniProtKB-UniRule"/>
</dbReference>
<dbReference type="GO" id="GO:0003899">
    <property type="term" value="F:DNA-directed RNA polymerase activity"/>
    <property type="evidence" value="ECO:0007669"/>
    <property type="project" value="UniProtKB-UniRule"/>
</dbReference>
<dbReference type="GO" id="GO:0032549">
    <property type="term" value="F:ribonucleoside binding"/>
    <property type="evidence" value="ECO:0007669"/>
    <property type="project" value="InterPro"/>
</dbReference>
<dbReference type="GO" id="GO:0006351">
    <property type="term" value="P:DNA-templated transcription"/>
    <property type="evidence" value="ECO:0007669"/>
    <property type="project" value="UniProtKB-UniRule"/>
</dbReference>
<dbReference type="CDD" id="cd00653">
    <property type="entry name" value="RNA_pol_B_RPB2"/>
    <property type="match status" value="1"/>
</dbReference>
<dbReference type="FunFam" id="2.40.50.100:FF:000006">
    <property type="entry name" value="DNA-directed RNA polymerase subunit beta"/>
    <property type="match status" value="1"/>
</dbReference>
<dbReference type="FunFam" id="3.90.1800.10:FF:000001">
    <property type="entry name" value="DNA-directed RNA polymerase subunit beta"/>
    <property type="match status" value="1"/>
</dbReference>
<dbReference type="Gene3D" id="2.40.50.100">
    <property type="match status" value="1"/>
</dbReference>
<dbReference type="Gene3D" id="2.40.50.150">
    <property type="match status" value="1"/>
</dbReference>
<dbReference type="Gene3D" id="3.90.1100.10">
    <property type="match status" value="2"/>
</dbReference>
<dbReference type="Gene3D" id="2.30.150.10">
    <property type="entry name" value="DNA-directed RNA polymerase, beta subunit, external 1 domain"/>
    <property type="match status" value="1"/>
</dbReference>
<dbReference type="Gene3D" id="2.40.270.10">
    <property type="entry name" value="DNA-directed RNA polymerase, subunit 2, domain 6"/>
    <property type="match status" value="2"/>
</dbReference>
<dbReference type="Gene3D" id="3.90.1800.10">
    <property type="entry name" value="RNA polymerase alpha subunit dimerisation domain"/>
    <property type="match status" value="1"/>
</dbReference>
<dbReference type="Gene3D" id="3.90.1110.10">
    <property type="entry name" value="RNA polymerase Rpb2, domain 2"/>
    <property type="match status" value="2"/>
</dbReference>
<dbReference type="HAMAP" id="MF_01321">
    <property type="entry name" value="RNApol_bact_RpoB"/>
    <property type="match status" value="1"/>
</dbReference>
<dbReference type="InterPro" id="IPR042107">
    <property type="entry name" value="DNA-dir_RNA_pol_bsu_ext_1_sf"/>
</dbReference>
<dbReference type="InterPro" id="IPR019462">
    <property type="entry name" value="DNA-dir_RNA_pol_bsu_external_1"/>
</dbReference>
<dbReference type="InterPro" id="IPR015712">
    <property type="entry name" value="DNA-dir_RNA_pol_su2"/>
</dbReference>
<dbReference type="InterPro" id="IPR007120">
    <property type="entry name" value="DNA-dir_RNAP_su2_dom"/>
</dbReference>
<dbReference type="InterPro" id="IPR037033">
    <property type="entry name" value="DNA-dir_RNAP_su2_hyb_sf"/>
</dbReference>
<dbReference type="InterPro" id="IPR010243">
    <property type="entry name" value="RNA_pol_bsu_bac"/>
</dbReference>
<dbReference type="InterPro" id="IPR007121">
    <property type="entry name" value="RNA_pol_bsu_CS"/>
</dbReference>
<dbReference type="InterPro" id="IPR007644">
    <property type="entry name" value="RNA_pol_bsu_protrusion"/>
</dbReference>
<dbReference type="InterPro" id="IPR007642">
    <property type="entry name" value="RNA_pol_Rpb2_2"/>
</dbReference>
<dbReference type="InterPro" id="IPR037034">
    <property type="entry name" value="RNA_pol_Rpb2_2_sf"/>
</dbReference>
<dbReference type="InterPro" id="IPR007645">
    <property type="entry name" value="RNA_pol_Rpb2_3"/>
</dbReference>
<dbReference type="InterPro" id="IPR007641">
    <property type="entry name" value="RNA_pol_Rpb2_7"/>
</dbReference>
<dbReference type="InterPro" id="IPR014724">
    <property type="entry name" value="RNA_pol_RPB2_OB-fold"/>
</dbReference>
<dbReference type="NCBIfam" id="NF001616">
    <property type="entry name" value="PRK00405.1"/>
    <property type="match status" value="1"/>
</dbReference>
<dbReference type="NCBIfam" id="TIGR02013">
    <property type="entry name" value="rpoB"/>
    <property type="match status" value="1"/>
</dbReference>
<dbReference type="PANTHER" id="PTHR20856">
    <property type="entry name" value="DNA-DIRECTED RNA POLYMERASE I SUBUNIT 2"/>
    <property type="match status" value="1"/>
</dbReference>
<dbReference type="Pfam" id="PF04563">
    <property type="entry name" value="RNA_pol_Rpb2_1"/>
    <property type="match status" value="1"/>
</dbReference>
<dbReference type="Pfam" id="PF04561">
    <property type="entry name" value="RNA_pol_Rpb2_2"/>
    <property type="match status" value="2"/>
</dbReference>
<dbReference type="Pfam" id="PF04565">
    <property type="entry name" value="RNA_pol_Rpb2_3"/>
    <property type="match status" value="1"/>
</dbReference>
<dbReference type="Pfam" id="PF10385">
    <property type="entry name" value="RNA_pol_Rpb2_45"/>
    <property type="match status" value="1"/>
</dbReference>
<dbReference type="Pfam" id="PF00562">
    <property type="entry name" value="RNA_pol_Rpb2_6"/>
    <property type="match status" value="1"/>
</dbReference>
<dbReference type="Pfam" id="PF04560">
    <property type="entry name" value="RNA_pol_Rpb2_7"/>
    <property type="match status" value="1"/>
</dbReference>
<dbReference type="SUPFAM" id="SSF64484">
    <property type="entry name" value="beta and beta-prime subunits of DNA dependent RNA-polymerase"/>
    <property type="match status" value="1"/>
</dbReference>
<dbReference type="PROSITE" id="PS01166">
    <property type="entry name" value="RNA_POL_BETA"/>
    <property type="match status" value="1"/>
</dbReference>
<sequence length="1377" mass="153669">MAQTHSFNGRKRVRKFFGKIPEVAEMPNLIEVQKASYDQFLMVEEPSGGRPDEGLQAVFKSVFPIQDFSGASMLEFVRYEFDPPKFDVDECRQRDLTYSAPLKVTLRLIVFDIDEDTGAKSIKDIKEQDVYMGDMPLMTDNGTFIVNGTERVIVSQMHRSPGVFFDHDKGKTHSSGKLLFAARVIPYRGSWLDIEFDSKDIVYARIDRRRKLPATTLLMALGMDGEEILSTFYKTVTYTRDGDNWRIPYSAERFKGMKIISDLVDADTGEVVLEAGKKLTARAAKQLAEKGLKAIKATEDDLFGSYLAEDVVNYATGEIYLEAGDEIDEKVLKTLIDTGETEINVLDIDHVNIGAYIRNTLAVDKNESRQEALFDIYRVMRPGEPPTMDSAEAMFHSLFFDSERYDLSAVGRVKMNMRLDLDAEDTVRVLRKEDILAVVKMLVELRDGRGEIDDIDNLGNRRVRSVGELMENQYRVGLLRMERAIKERMSSIEIDTVMPQDLINAKPAAAAVREFFGSSQLSQFMDQTNPLSEITHKRRLSALGPGGLTRERAGFEVRDVHPTHYGRICPIETPEGPNIGLINSLATFARVNKYGFIESPYRKVVDGKVTNDVVYLSAMEEAKHSVAQANVELDEQGGFVDEFVICRHAGEVMMAPRENVDLMDVSPKQLVSVAAALIPFLENDDANRALMGSNMQRQAVPLVRAEAPFVGTGMEPIVARDSGAAIAARRGGIVDQVDATRIVIRATEELDPSKSGVDIYRLQKFQRSNQSTCINQRPLVRVGDRIHKGDIIADGPSTDLGDLALGRNVLVAFMPWNGYNYEDSILLSEKIVSDDVFTSIHIEEFEVAARDTKLGPEEITRDIPNVSEEALKNLDEAGIVYIGAEVHPGDILVGKITPKGESPMTPEEKLLRAIFGEKASDVRDTSMRMPPGTYGTVVEVRVFNRHGVEKDERAMAIEREEIERLAKDRDDEQAILDRNVYGRLADMIDGKVAAAGPKGFKKGTTITRELMTEYPRSQWWQFAVEDEKLQGELEALRSQYDDSKKLLEARFMDKVEKVQRGDEMPPGVMKMVKVFVAVKRKIQPGDKMAGRHGNKGVVSRILPVEDMPFLEDGTHADIVLNPLGVPSRMNVGQILETHLGWACAGMGKKIGELLDVYRKTANIEPLRQTLEHIYPDNDRNEPVRSYDDDAILMLANQVKRGVSIATPVFDGAVEADINAMLTDAGLATSGQSTLYDGRTGEPFDRQVTMGYIYMLKLHHLVDDKIHARSIGPYSLVTQQPLGGKAQFGGQRFGEMEVWALEAYGAAYTLQEMLTVKSDDVAGRTKVYEAIVRGDDTFEAGIPESFNVLVKEMRSLGLNVELDDTREAEQPALPDAAE</sequence>
<evidence type="ECO:0000255" key="1">
    <source>
        <dbReference type="HAMAP-Rule" id="MF_01321"/>
    </source>
</evidence>
<organism>
    <name type="scientific">Brucella abortus (strain S19)</name>
    <dbReference type="NCBI Taxonomy" id="430066"/>
    <lineage>
        <taxon>Bacteria</taxon>
        <taxon>Pseudomonadati</taxon>
        <taxon>Pseudomonadota</taxon>
        <taxon>Alphaproteobacteria</taxon>
        <taxon>Hyphomicrobiales</taxon>
        <taxon>Brucellaceae</taxon>
        <taxon>Brucella/Ochrobactrum group</taxon>
        <taxon>Brucella</taxon>
    </lineage>
</organism>
<comment type="function">
    <text evidence="1">DNA-dependent RNA polymerase catalyzes the transcription of DNA into RNA using the four ribonucleoside triphosphates as substrates.</text>
</comment>
<comment type="catalytic activity">
    <reaction evidence="1">
        <text>RNA(n) + a ribonucleoside 5'-triphosphate = RNA(n+1) + diphosphate</text>
        <dbReference type="Rhea" id="RHEA:21248"/>
        <dbReference type="Rhea" id="RHEA-COMP:14527"/>
        <dbReference type="Rhea" id="RHEA-COMP:17342"/>
        <dbReference type="ChEBI" id="CHEBI:33019"/>
        <dbReference type="ChEBI" id="CHEBI:61557"/>
        <dbReference type="ChEBI" id="CHEBI:140395"/>
        <dbReference type="EC" id="2.7.7.6"/>
    </reaction>
</comment>
<comment type="subunit">
    <text evidence="1">The RNAP catalytic core consists of 2 alpha, 1 beta, 1 beta' and 1 omega subunit. When a sigma factor is associated with the core the holoenzyme is formed, which can initiate transcription.</text>
</comment>
<comment type="similarity">
    <text evidence="1">Belongs to the RNA polymerase beta chain family.</text>
</comment>
<keyword id="KW-0240">DNA-directed RNA polymerase</keyword>
<keyword id="KW-0548">Nucleotidyltransferase</keyword>
<keyword id="KW-0804">Transcription</keyword>
<keyword id="KW-0808">Transferase</keyword>
<name>RPOB_BRUA1</name>